<dbReference type="EC" id="3.2.2.27" evidence="1"/>
<dbReference type="EMBL" id="CP001072">
    <property type="protein sequence ID" value="ACD48792.1"/>
    <property type="molecule type" value="Genomic_DNA"/>
</dbReference>
<dbReference type="RefSeq" id="WP_000764779.1">
    <property type="nucleotide sequence ID" value="NC_010698.2"/>
</dbReference>
<dbReference type="SMR" id="B2UVB0"/>
<dbReference type="KEGG" id="hps:HPSH_06970"/>
<dbReference type="HOGENOM" id="CLU_032162_3_2_7"/>
<dbReference type="GO" id="GO:0005737">
    <property type="term" value="C:cytoplasm"/>
    <property type="evidence" value="ECO:0007669"/>
    <property type="project" value="UniProtKB-SubCell"/>
</dbReference>
<dbReference type="GO" id="GO:0004844">
    <property type="term" value="F:uracil DNA N-glycosylase activity"/>
    <property type="evidence" value="ECO:0007669"/>
    <property type="project" value="UniProtKB-UniRule"/>
</dbReference>
<dbReference type="GO" id="GO:0097510">
    <property type="term" value="P:base-excision repair, AP site formation via deaminated base removal"/>
    <property type="evidence" value="ECO:0007669"/>
    <property type="project" value="TreeGrafter"/>
</dbReference>
<dbReference type="CDD" id="cd10027">
    <property type="entry name" value="UDG-F1-like"/>
    <property type="match status" value="1"/>
</dbReference>
<dbReference type="Gene3D" id="3.40.470.10">
    <property type="entry name" value="Uracil-DNA glycosylase-like domain"/>
    <property type="match status" value="1"/>
</dbReference>
<dbReference type="HAMAP" id="MF_00148">
    <property type="entry name" value="UDG"/>
    <property type="match status" value="1"/>
</dbReference>
<dbReference type="InterPro" id="IPR002043">
    <property type="entry name" value="UDG_fam1"/>
</dbReference>
<dbReference type="InterPro" id="IPR018085">
    <property type="entry name" value="Ura-DNA_Glyclase_AS"/>
</dbReference>
<dbReference type="InterPro" id="IPR005122">
    <property type="entry name" value="Uracil-DNA_glycosylase-like"/>
</dbReference>
<dbReference type="InterPro" id="IPR036895">
    <property type="entry name" value="Uracil-DNA_glycosylase-like_sf"/>
</dbReference>
<dbReference type="NCBIfam" id="NF003588">
    <property type="entry name" value="PRK05254.1-1"/>
    <property type="match status" value="1"/>
</dbReference>
<dbReference type="NCBIfam" id="NF003589">
    <property type="entry name" value="PRK05254.1-2"/>
    <property type="match status" value="1"/>
</dbReference>
<dbReference type="NCBIfam" id="NF003592">
    <property type="entry name" value="PRK05254.1-5"/>
    <property type="match status" value="1"/>
</dbReference>
<dbReference type="NCBIfam" id="TIGR00628">
    <property type="entry name" value="ung"/>
    <property type="match status" value="1"/>
</dbReference>
<dbReference type="PANTHER" id="PTHR11264">
    <property type="entry name" value="URACIL-DNA GLYCOSYLASE"/>
    <property type="match status" value="1"/>
</dbReference>
<dbReference type="PANTHER" id="PTHR11264:SF0">
    <property type="entry name" value="URACIL-DNA GLYCOSYLASE"/>
    <property type="match status" value="1"/>
</dbReference>
<dbReference type="Pfam" id="PF03167">
    <property type="entry name" value="UDG"/>
    <property type="match status" value="1"/>
</dbReference>
<dbReference type="SMART" id="SM00986">
    <property type="entry name" value="UDG"/>
    <property type="match status" value="1"/>
</dbReference>
<dbReference type="SMART" id="SM00987">
    <property type="entry name" value="UreE_C"/>
    <property type="match status" value="1"/>
</dbReference>
<dbReference type="SUPFAM" id="SSF52141">
    <property type="entry name" value="Uracil-DNA glycosylase-like"/>
    <property type="match status" value="1"/>
</dbReference>
<dbReference type="PROSITE" id="PS00130">
    <property type="entry name" value="U_DNA_GLYCOSYLASE"/>
    <property type="match status" value="1"/>
</dbReference>
<organism>
    <name type="scientific">Helicobacter pylori (strain Shi470)</name>
    <dbReference type="NCBI Taxonomy" id="512562"/>
    <lineage>
        <taxon>Bacteria</taxon>
        <taxon>Pseudomonadati</taxon>
        <taxon>Campylobacterota</taxon>
        <taxon>Epsilonproteobacteria</taxon>
        <taxon>Campylobacterales</taxon>
        <taxon>Helicobacteraceae</taxon>
        <taxon>Helicobacter</taxon>
    </lineage>
</organism>
<keyword id="KW-0963">Cytoplasm</keyword>
<keyword id="KW-0227">DNA damage</keyword>
<keyword id="KW-0234">DNA repair</keyword>
<keyword id="KW-0378">Hydrolase</keyword>
<feature type="chain" id="PRO_1000096586" description="Uracil-DNA glycosylase">
    <location>
        <begin position="1"/>
        <end position="233"/>
    </location>
</feature>
<feature type="active site" description="Proton acceptor" evidence="1">
    <location>
        <position position="70"/>
    </location>
</feature>
<proteinExistence type="inferred from homology"/>
<name>UNG_HELPS</name>
<reference key="1">
    <citation type="submission" date="2008-05" db="EMBL/GenBank/DDBJ databases">
        <title>Genome sequence of Helicobacter pylori from the remote Amazon: traces of Asian ancestry of the first Americans.</title>
        <authorList>
            <person name="Kersulyte D."/>
            <person name="Kalia A."/>
            <person name="Gilman R.H."/>
            <person name="Berg D.E."/>
        </authorList>
    </citation>
    <scope>NUCLEOTIDE SEQUENCE [LARGE SCALE GENOMIC DNA]</scope>
    <source>
        <strain>Shi470</strain>
    </source>
</reference>
<accession>B2UVB0</accession>
<sequence>MKLFDCAPLSLAWREFLQSEFKKPYFLEIEKRYLEALKSPKTIFPKSSNLFYALNLTPPSAVKIILLGQDPYHSTYLKNQQELPVAMGLSFSVGKNAPIPPSLKNIFKELHANLGVSVPCCGDLSAWAKRGMLLLNAILSVEKNQAASHKRIGWEAFSDQILMRLFEANAPLIVVLLGKIAQKKIALIPKNKHIIITAPHPSPLSRGFLGSGVFTSIQNAHREIYHKDFDFSL</sequence>
<evidence type="ECO:0000255" key="1">
    <source>
        <dbReference type="HAMAP-Rule" id="MF_00148"/>
    </source>
</evidence>
<protein>
    <recommendedName>
        <fullName evidence="1">Uracil-DNA glycosylase</fullName>
        <shortName evidence="1">UDG</shortName>
        <ecNumber evidence="1">3.2.2.27</ecNumber>
    </recommendedName>
</protein>
<gene>
    <name evidence="1" type="primary">ung</name>
    <name type="ordered locus">HPSH_06970</name>
</gene>
<comment type="function">
    <text evidence="1">Excises uracil residues from the DNA which can arise as a result of misincorporation of dUMP residues by DNA polymerase or due to deamination of cytosine.</text>
</comment>
<comment type="catalytic activity">
    <reaction evidence="1">
        <text>Hydrolyzes single-stranded DNA or mismatched double-stranded DNA and polynucleotides, releasing free uracil.</text>
        <dbReference type="EC" id="3.2.2.27"/>
    </reaction>
</comment>
<comment type="subcellular location">
    <subcellularLocation>
        <location evidence="1">Cytoplasm</location>
    </subcellularLocation>
</comment>
<comment type="similarity">
    <text evidence="1">Belongs to the uracil-DNA glycosylase (UDG) superfamily. UNG family.</text>
</comment>